<name>IAA5_ORYSI</name>
<comment type="function">
    <text evidence="1">Aux/IAA proteins are short-lived transcriptional factors that function as repressors of early auxin response genes at low auxin concentrations.</text>
</comment>
<comment type="subunit">
    <text evidence="1">Homodimers and heterodimers.</text>
</comment>
<comment type="subcellular location">
    <subcellularLocation>
        <location evidence="1">Nucleus</location>
    </subcellularLocation>
</comment>
<comment type="tissue specificity">
    <text evidence="4">Highly expressed in roots and flowers. Expressed in shoots.</text>
</comment>
<comment type="induction">
    <text evidence="4">Not induced by auxin.</text>
</comment>
<comment type="similarity">
    <text evidence="5">Belongs to the Aux/IAA family.</text>
</comment>
<feature type="chain" id="PRO_0000291396" description="Auxin-responsive protein IAA5">
    <location>
        <begin position="1"/>
        <end position="272"/>
    </location>
</feature>
<feature type="domain" description="PB1" evidence="2">
    <location>
        <begin position="152"/>
        <end position="256"/>
    </location>
</feature>
<feature type="region of interest" description="Disordered" evidence="3">
    <location>
        <begin position="1"/>
        <end position="92"/>
    </location>
</feature>
<feature type="short sequence motif" description="EAR-like (transcriptional repression)" evidence="1">
    <location>
        <begin position="44"/>
        <end position="48"/>
    </location>
</feature>
<feature type="compositionally biased region" description="Low complexity" evidence="3">
    <location>
        <begin position="14"/>
        <end position="33"/>
    </location>
</feature>
<feature type="compositionally biased region" description="Low complexity" evidence="3">
    <location>
        <begin position="40"/>
        <end position="50"/>
    </location>
</feature>
<feature type="sequence conflict" description="In Ref. 2; CAF28457." evidence="5" ref="2">
    <original>V</original>
    <variation>A</variation>
    <location>
        <position position="59"/>
    </location>
</feature>
<gene>
    <name type="primary">IAA5</name>
    <name type="synonym">IAA8</name>
    <name type="ORF">OsI_03247</name>
</gene>
<dbReference type="EMBL" id="CM000126">
    <property type="protein sequence ID" value="EEC71261.1"/>
    <property type="molecule type" value="Genomic_DNA"/>
</dbReference>
<dbReference type="EMBL" id="AJ627256">
    <property type="protein sequence ID" value="CAF28457.1"/>
    <property type="molecule type" value="mRNA"/>
</dbReference>
<dbReference type="SMR" id="A2WTQ5"/>
<dbReference type="STRING" id="39946.A2WTQ5"/>
<dbReference type="EnsemblPlants" id="BGIOSGA004190-TA">
    <property type="protein sequence ID" value="BGIOSGA004190-PA"/>
    <property type="gene ID" value="BGIOSGA004190"/>
</dbReference>
<dbReference type="Gramene" id="BGIOSGA004190-TA">
    <property type="protein sequence ID" value="BGIOSGA004190-PA"/>
    <property type="gene ID" value="BGIOSGA004190"/>
</dbReference>
<dbReference type="HOGENOM" id="CLU_049393_1_0_1"/>
<dbReference type="OMA" id="XARAGEG"/>
<dbReference type="Proteomes" id="UP000007015">
    <property type="component" value="Chromosome 1"/>
</dbReference>
<dbReference type="ExpressionAtlas" id="A2WTQ5">
    <property type="expression patterns" value="differential"/>
</dbReference>
<dbReference type="GO" id="GO:0005634">
    <property type="term" value="C:nucleus"/>
    <property type="evidence" value="ECO:0007669"/>
    <property type="project" value="UniProtKB-SubCell"/>
</dbReference>
<dbReference type="GO" id="GO:0009734">
    <property type="term" value="P:auxin-activated signaling pathway"/>
    <property type="evidence" value="ECO:0007669"/>
    <property type="project" value="UniProtKB-KW"/>
</dbReference>
<dbReference type="GO" id="GO:0006355">
    <property type="term" value="P:regulation of DNA-templated transcription"/>
    <property type="evidence" value="ECO:0007669"/>
    <property type="project" value="InterPro"/>
</dbReference>
<dbReference type="FunFam" id="3.10.20.90:FF:000078">
    <property type="entry name" value="Auxin-responsive protein"/>
    <property type="match status" value="1"/>
</dbReference>
<dbReference type="Gene3D" id="3.10.20.90">
    <property type="entry name" value="Phosphatidylinositol 3-kinase Catalytic Subunit, Chain A, domain 1"/>
    <property type="match status" value="1"/>
</dbReference>
<dbReference type="InterPro" id="IPR033389">
    <property type="entry name" value="AUX/IAA_dom"/>
</dbReference>
<dbReference type="InterPro" id="IPR003311">
    <property type="entry name" value="AUX_IAA"/>
</dbReference>
<dbReference type="InterPro" id="IPR053793">
    <property type="entry name" value="PB1-like"/>
</dbReference>
<dbReference type="PANTHER" id="PTHR31734">
    <property type="entry name" value="AUXIN-RESPONSIVE PROTEIN IAA17"/>
    <property type="match status" value="1"/>
</dbReference>
<dbReference type="PANTHER" id="PTHR31734:SF16">
    <property type="entry name" value="AUXIN-RESPONSIVE PROTEIN IAA5"/>
    <property type="match status" value="1"/>
</dbReference>
<dbReference type="Pfam" id="PF02309">
    <property type="entry name" value="AUX_IAA"/>
    <property type="match status" value="1"/>
</dbReference>
<dbReference type="SUPFAM" id="SSF54277">
    <property type="entry name" value="CAD &amp; PB1 domains"/>
    <property type="match status" value="1"/>
</dbReference>
<dbReference type="PROSITE" id="PS51745">
    <property type="entry name" value="PB1"/>
    <property type="match status" value="1"/>
</dbReference>
<reference key="1">
    <citation type="journal article" date="2005" name="PLoS Biol.">
        <title>The genomes of Oryza sativa: a history of duplications.</title>
        <authorList>
            <person name="Yu J."/>
            <person name="Wang J."/>
            <person name="Lin W."/>
            <person name="Li S."/>
            <person name="Li H."/>
            <person name="Zhou J."/>
            <person name="Ni P."/>
            <person name="Dong W."/>
            <person name="Hu S."/>
            <person name="Zeng C."/>
            <person name="Zhang J."/>
            <person name="Zhang Y."/>
            <person name="Li R."/>
            <person name="Xu Z."/>
            <person name="Li S."/>
            <person name="Li X."/>
            <person name="Zheng H."/>
            <person name="Cong L."/>
            <person name="Lin L."/>
            <person name="Yin J."/>
            <person name="Geng J."/>
            <person name="Li G."/>
            <person name="Shi J."/>
            <person name="Liu J."/>
            <person name="Lv H."/>
            <person name="Li J."/>
            <person name="Wang J."/>
            <person name="Deng Y."/>
            <person name="Ran L."/>
            <person name="Shi X."/>
            <person name="Wang X."/>
            <person name="Wu Q."/>
            <person name="Li C."/>
            <person name="Ren X."/>
            <person name="Wang J."/>
            <person name="Wang X."/>
            <person name="Li D."/>
            <person name="Liu D."/>
            <person name="Zhang X."/>
            <person name="Ji Z."/>
            <person name="Zhao W."/>
            <person name="Sun Y."/>
            <person name="Zhang Z."/>
            <person name="Bao J."/>
            <person name="Han Y."/>
            <person name="Dong L."/>
            <person name="Ji J."/>
            <person name="Chen P."/>
            <person name="Wu S."/>
            <person name="Liu J."/>
            <person name="Xiao Y."/>
            <person name="Bu D."/>
            <person name="Tan J."/>
            <person name="Yang L."/>
            <person name="Ye C."/>
            <person name="Zhang J."/>
            <person name="Xu J."/>
            <person name="Zhou Y."/>
            <person name="Yu Y."/>
            <person name="Zhang B."/>
            <person name="Zhuang S."/>
            <person name="Wei H."/>
            <person name="Liu B."/>
            <person name="Lei M."/>
            <person name="Yu H."/>
            <person name="Li Y."/>
            <person name="Xu H."/>
            <person name="Wei S."/>
            <person name="He X."/>
            <person name="Fang L."/>
            <person name="Zhang Z."/>
            <person name="Zhang Y."/>
            <person name="Huang X."/>
            <person name="Su Z."/>
            <person name="Tong W."/>
            <person name="Li J."/>
            <person name="Tong Z."/>
            <person name="Li S."/>
            <person name="Ye J."/>
            <person name="Wang L."/>
            <person name="Fang L."/>
            <person name="Lei T."/>
            <person name="Chen C.-S."/>
            <person name="Chen H.-C."/>
            <person name="Xu Z."/>
            <person name="Li H."/>
            <person name="Huang H."/>
            <person name="Zhang F."/>
            <person name="Xu H."/>
            <person name="Li N."/>
            <person name="Zhao C."/>
            <person name="Li S."/>
            <person name="Dong L."/>
            <person name="Huang Y."/>
            <person name="Li L."/>
            <person name="Xi Y."/>
            <person name="Qi Q."/>
            <person name="Li W."/>
            <person name="Zhang B."/>
            <person name="Hu W."/>
            <person name="Zhang Y."/>
            <person name="Tian X."/>
            <person name="Jiao Y."/>
            <person name="Liang X."/>
            <person name="Jin J."/>
            <person name="Gao L."/>
            <person name="Zheng W."/>
            <person name="Hao B."/>
            <person name="Liu S.-M."/>
            <person name="Wang W."/>
            <person name="Yuan L."/>
            <person name="Cao M."/>
            <person name="McDermott J."/>
            <person name="Samudrala R."/>
            <person name="Wang J."/>
            <person name="Wong G.K.-S."/>
            <person name="Yang H."/>
        </authorList>
    </citation>
    <scope>NUCLEOTIDE SEQUENCE [LARGE SCALE GENOMIC DNA]</scope>
    <source>
        <strain>cv. 93-11</strain>
    </source>
</reference>
<reference key="2">
    <citation type="journal article" date="2006" name="Funct. Integr. Genomics">
        <title>Structure and expression analysis of early auxin-responsive Aux/IAA gene family in rice (Oryza sativa).</title>
        <authorList>
            <person name="Jain M."/>
            <person name="Kaur N."/>
            <person name="Garg R."/>
            <person name="Thakur J.K."/>
            <person name="Tyagi A.K."/>
            <person name="Khurana J.P."/>
        </authorList>
    </citation>
    <scope>NUCLEOTIDE SEQUENCE [MRNA] OF 6-272</scope>
    <scope>TISSUE SPECIFICITY</scope>
    <scope>INDUCTION</scope>
    <scope>NOMENCLATURE</scope>
    <source>
        <tissue>Shoot</tissue>
    </source>
</reference>
<evidence type="ECO:0000250" key="1"/>
<evidence type="ECO:0000255" key="2">
    <source>
        <dbReference type="PROSITE-ProRule" id="PRU01081"/>
    </source>
</evidence>
<evidence type="ECO:0000256" key="3">
    <source>
        <dbReference type="SAM" id="MobiDB-lite"/>
    </source>
</evidence>
<evidence type="ECO:0000269" key="4">
    <source>
    </source>
</evidence>
<evidence type="ECO:0000305" key="5"/>
<keyword id="KW-0927">Auxin signaling pathway</keyword>
<keyword id="KW-0539">Nucleus</keyword>
<keyword id="KW-1185">Reference proteome</keyword>
<keyword id="KW-0678">Repressor</keyword>
<keyword id="KW-0804">Transcription</keyword>
<keyword id="KW-0805">Transcription regulation</keyword>
<proteinExistence type="evidence at transcript level"/>
<accession>A2WTQ5</accession>
<accession>B8A7N5</accession>
<accession>Q59AF3</accession>
<accession>Q8LQP8</accession>
<organism>
    <name type="scientific">Oryza sativa subsp. indica</name>
    <name type="common">Rice</name>
    <dbReference type="NCBI Taxonomy" id="39946"/>
    <lineage>
        <taxon>Eukaryota</taxon>
        <taxon>Viridiplantae</taxon>
        <taxon>Streptophyta</taxon>
        <taxon>Embryophyta</taxon>
        <taxon>Tracheophyta</taxon>
        <taxon>Spermatophyta</taxon>
        <taxon>Magnoliopsida</taxon>
        <taxon>Liliopsida</taxon>
        <taxon>Poales</taxon>
        <taxon>Poaceae</taxon>
        <taxon>BOP clade</taxon>
        <taxon>Oryzoideae</taxon>
        <taxon>Oryzeae</taxon>
        <taxon>Oryzinae</taxon>
        <taxon>Oryza</taxon>
        <taxon>Oryza sativa</taxon>
    </lineage>
</organism>
<sequence length="272" mass="28502">MSPPLEPHDYIGLSAAAASPTPSSSSCSSSPNPGGEARGPRLTLRLGLPGSESPEREVVAAGLTLGPLPPTTTKAASKRAFPDSSPRHGASSGSVAAAAAACQDKAAPAAAPPAAKAQVVGWPPVRNYRKNTLAASASKGKGEDKGTAEGGPLYVKVSMDGAPYLRKVDLKMYSSYEDLSMALEKMFSCFITGQSGLRKSSNRDRLTNGSKADALQDQEYVLTYEDKDADWMLVGDLPWDLFTTICRKLKIMRGSDAAGIAPRSIEQSGQSR</sequence>
<protein>
    <recommendedName>
        <fullName>Auxin-responsive protein IAA5</fullName>
    </recommendedName>
    <alternativeName>
        <fullName>Indoleacetic acid-induced protein 5</fullName>
    </alternativeName>
</protein>